<accession>Q8IA42</accession>
<accession>Q8IQ11</accession>
<gene>
    <name evidence="11" type="primary">Pgant4</name>
    <name evidence="11" type="ORF">CG31956</name>
</gene>
<organism>
    <name type="scientific">Drosophila melanogaster</name>
    <name type="common">Fruit fly</name>
    <dbReference type="NCBI Taxonomy" id="7227"/>
    <lineage>
        <taxon>Eukaryota</taxon>
        <taxon>Metazoa</taxon>
        <taxon>Ecdysozoa</taxon>
        <taxon>Arthropoda</taxon>
        <taxon>Hexapoda</taxon>
        <taxon>Insecta</taxon>
        <taxon>Pterygota</taxon>
        <taxon>Neoptera</taxon>
        <taxon>Endopterygota</taxon>
        <taxon>Diptera</taxon>
        <taxon>Brachycera</taxon>
        <taxon>Muscomorpha</taxon>
        <taxon>Ephydroidea</taxon>
        <taxon>Drosophilidae</taxon>
        <taxon>Drosophila</taxon>
        <taxon>Sophophora</taxon>
    </lineage>
</organism>
<comment type="function">
    <text evidence="6">Glycopeptide transferase involved in O-linked oligosaccharide biosynthesis, which catalyzes the transfer of an N-acetyl-D-galactosamine residue to an already glycosylated peptide. In contrast to other proteins of the family, it does not act as a peptide transferase that transfers GalNAc onto serine or threonine residue on the protein receptor, but instead requires the prior addition of a GalNAc on a peptide before adding additional GalNAc moieties. Some peptide transferase activity is however not excluded, considering that its appropriate peptide substrate may remain unidentified. Prefers the diglycosylated Muc5AC-3/13 as substrate.</text>
</comment>
<comment type="catalytic activity">
    <reaction evidence="6">
        <text>L-seryl-[protein] + UDP-N-acetyl-alpha-D-galactosamine = a 3-O-[N-acetyl-alpha-D-galactosaminyl]-L-seryl-[protein] + UDP + H(+)</text>
        <dbReference type="Rhea" id="RHEA:23956"/>
        <dbReference type="Rhea" id="RHEA-COMP:9863"/>
        <dbReference type="Rhea" id="RHEA-COMP:12788"/>
        <dbReference type="ChEBI" id="CHEBI:15378"/>
        <dbReference type="ChEBI" id="CHEBI:29999"/>
        <dbReference type="ChEBI" id="CHEBI:53604"/>
        <dbReference type="ChEBI" id="CHEBI:58223"/>
        <dbReference type="ChEBI" id="CHEBI:67138"/>
        <dbReference type="EC" id="2.4.1.41"/>
    </reaction>
</comment>
<comment type="catalytic activity">
    <reaction evidence="6">
        <text>L-threonyl-[protein] + UDP-N-acetyl-alpha-D-galactosamine = a 3-O-[N-acetyl-alpha-D-galactosaminyl]-L-threonyl-[protein] + UDP + H(+)</text>
        <dbReference type="Rhea" id="RHEA:52424"/>
        <dbReference type="Rhea" id="RHEA-COMP:11060"/>
        <dbReference type="Rhea" id="RHEA-COMP:11689"/>
        <dbReference type="ChEBI" id="CHEBI:15378"/>
        <dbReference type="ChEBI" id="CHEBI:30013"/>
        <dbReference type="ChEBI" id="CHEBI:58223"/>
        <dbReference type="ChEBI" id="CHEBI:67138"/>
        <dbReference type="ChEBI" id="CHEBI:87075"/>
        <dbReference type="EC" id="2.4.1.41"/>
    </reaction>
</comment>
<comment type="cofactor">
    <cofactor evidence="1">
        <name>Mn(2+)</name>
        <dbReference type="ChEBI" id="CHEBI:29035"/>
    </cofactor>
</comment>
<comment type="pathway">
    <text evidence="10">Protein modification; protein glycosylation.</text>
</comment>
<comment type="subcellular location">
    <subcellularLocation>
        <location evidence="1">Golgi apparatus membrane</location>
        <topology evidence="1">Single-pass type II membrane protein</topology>
    </subcellularLocation>
</comment>
<comment type="tissue specificity">
    <text evidence="6 7">Expressed in developing oocytes and egg chambers. During embryonic stages 9-11, expressed in the primordium of the foregut, midgut and hindgut. During embryonic stages 12-13, shows specific expression in the proventriculus that continues until the end of embryogenesis. In third instar larvae, ubiquitously expressed in wing, eye-antennal, leg and haltere imaginal disks.</text>
</comment>
<comment type="developmental stage">
    <text evidence="6 7">Expressed both maternally and zygotically. Expressed during embryonic, larval, pupal and adult stages. Weakly expressed during early embryonic stages but displays a dramatic increase at 12-24 hours of embryonic development. Continues to be in adult but displays much lower levels in the female adult as compared with the male.</text>
</comment>
<comment type="domain">
    <text evidence="2">There are two conserved domains in the glycosyltransferase region: the N-terminal domain (domain A, also called GT1 motif), which is probably involved in manganese coordination and substrate binding and the C-terminal domain (domain B, also called Gal/GalNAc-T motif), which is probably involved in catalytic reaction and UDP-Gal binding.</text>
</comment>
<comment type="domain">
    <text evidence="1">The ricin B-type lectin domain binds to GalNAc and contributes to the glycopeptide specificity.</text>
</comment>
<comment type="disruption phenotype">
    <text evidence="8">RNAi-mediated knockdown in the whole body or the digestive system and reproductive tract is lethal (PubMed:22157008). RNAi-mediated knockdown in hemocytes, epiderm, endoderm, mesoderm, respiratory system or nervous system causes no defect (PubMed:22157008).</text>
</comment>
<comment type="similarity">
    <text evidence="9">Belongs to the glycosyltransferase 2 family. GalNAc-T subfamily.</text>
</comment>
<comment type="sequence caution" evidence="9">
    <conflict type="erroneous initiation">
        <sequence resource="EMBL-CDS" id="AAQ56701"/>
    </conflict>
    <text>Extended N-terminus.</text>
</comment>
<reference key="1">
    <citation type="journal article" date="2003" name="J. Biol. Chem.">
        <title>Functional characterization and expression analysis of members of the UDP-GalNAc:polypeptide N-acetylgalactosaminyltransferase family from Drosophila melanogaster.</title>
        <authorList>
            <person name="Ten Hagen K.G."/>
            <person name="Tran D.T."/>
            <person name="Gerken T.A."/>
            <person name="Stein D.S."/>
            <person name="Zhang Z."/>
        </authorList>
    </citation>
    <scope>NUCLEOTIDE SEQUENCE [MRNA]</scope>
    <scope>FUNCTION</scope>
    <scope>CATALYTIC ACTIVITY</scope>
    <scope>TISSUE SPECIFICITY</scope>
    <scope>DEVELOPMENTAL STAGE</scope>
    <source>
        <strain>Canton-S</strain>
        <tissue>Embryo</tissue>
    </source>
</reference>
<reference key="2">
    <citation type="journal article" date="2000" name="Science">
        <title>The genome sequence of Drosophila melanogaster.</title>
        <authorList>
            <person name="Adams M.D."/>
            <person name="Celniker S.E."/>
            <person name="Holt R.A."/>
            <person name="Evans C.A."/>
            <person name="Gocayne J.D."/>
            <person name="Amanatides P.G."/>
            <person name="Scherer S.E."/>
            <person name="Li P.W."/>
            <person name="Hoskins R.A."/>
            <person name="Galle R.F."/>
            <person name="George R.A."/>
            <person name="Lewis S.E."/>
            <person name="Richards S."/>
            <person name="Ashburner M."/>
            <person name="Henderson S.N."/>
            <person name="Sutton G.G."/>
            <person name="Wortman J.R."/>
            <person name="Yandell M.D."/>
            <person name="Zhang Q."/>
            <person name="Chen L.X."/>
            <person name="Brandon R.C."/>
            <person name="Rogers Y.-H.C."/>
            <person name="Blazej R.G."/>
            <person name="Champe M."/>
            <person name="Pfeiffer B.D."/>
            <person name="Wan K.H."/>
            <person name="Doyle C."/>
            <person name="Baxter E.G."/>
            <person name="Helt G."/>
            <person name="Nelson C.R."/>
            <person name="Miklos G.L.G."/>
            <person name="Abril J.F."/>
            <person name="Agbayani A."/>
            <person name="An H.-J."/>
            <person name="Andrews-Pfannkoch C."/>
            <person name="Baldwin D."/>
            <person name="Ballew R.M."/>
            <person name="Basu A."/>
            <person name="Baxendale J."/>
            <person name="Bayraktaroglu L."/>
            <person name="Beasley E.M."/>
            <person name="Beeson K.Y."/>
            <person name="Benos P.V."/>
            <person name="Berman B.P."/>
            <person name="Bhandari D."/>
            <person name="Bolshakov S."/>
            <person name="Borkova D."/>
            <person name="Botchan M.R."/>
            <person name="Bouck J."/>
            <person name="Brokstein P."/>
            <person name="Brottier P."/>
            <person name="Burtis K.C."/>
            <person name="Busam D.A."/>
            <person name="Butler H."/>
            <person name="Cadieu E."/>
            <person name="Center A."/>
            <person name="Chandra I."/>
            <person name="Cherry J.M."/>
            <person name="Cawley S."/>
            <person name="Dahlke C."/>
            <person name="Davenport L.B."/>
            <person name="Davies P."/>
            <person name="de Pablos B."/>
            <person name="Delcher A."/>
            <person name="Deng Z."/>
            <person name="Mays A.D."/>
            <person name="Dew I."/>
            <person name="Dietz S.M."/>
            <person name="Dodson K."/>
            <person name="Doup L.E."/>
            <person name="Downes M."/>
            <person name="Dugan-Rocha S."/>
            <person name="Dunkov B.C."/>
            <person name="Dunn P."/>
            <person name="Durbin K.J."/>
            <person name="Evangelista C.C."/>
            <person name="Ferraz C."/>
            <person name="Ferriera S."/>
            <person name="Fleischmann W."/>
            <person name="Fosler C."/>
            <person name="Gabrielian A.E."/>
            <person name="Garg N.S."/>
            <person name="Gelbart W.M."/>
            <person name="Glasser K."/>
            <person name="Glodek A."/>
            <person name="Gong F."/>
            <person name="Gorrell J.H."/>
            <person name="Gu Z."/>
            <person name="Guan P."/>
            <person name="Harris M."/>
            <person name="Harris N.L."/>
            <person name="Harvey D.A."/>
            <person name="Heiman T.J."/>
            <person name="Hernandez J.R."/>
            <person name="Houck J."/>
            <person name="Hostin D."/>
            <person name="Houston K.A."/>
            <person name="Howland T.J."/>
            <person name="Wei M.-H."/>
            <person name="Ibegwam C."/>
            <person name="Jalali M."/>
            <person name="Kalush F."/>
            <person name="Karpen G.H."/>
            <person name="Ke Z."/>
            <person name="Kennison J.A."/>
            <person name="Ketchum K.A."/>
            <person name="Kimmel B.E."/>
            <person name="Kodira C.D."/>
            <person name="Kraft C.L."/>
            <person name="Kravitz S."/>
            <person name="Kulp D."/>
            <person name="Lai Z."/>
            <person name="Lasko P."/>
            <person name="Lei Y."/>
            <person name="Levitsky A.A."/>
            <person name="Li J.H."/>
            <person name="Li Z."/>
            <person name="Liang Y."/>
            <person name="Lin X."/>
            <person name="Liu X."/>
            <person name="Mattei B."/>
            <person name="McIntosh T.C."/>
            <person name="McLeod M.P."/>
            <person name="McPherson D."/>
            <person name="Merkulov G."/>
            <person name="Milshina N.V."/>
            <person name="Mobarry C."/>
            <person name="Morris J."/>
            <person name="Moshrefi A."/>
            <person name="Mount S.M."/>
            <person name="Moy M."/>
            <person name="Murphy B."/>
            <person name="Murphy L."/>
            <person name="Muzny D.M."/>
            <person name="Nelson D.L."/>
            <person name="Nelson D.R."/>
            <person name="Nelson K.A."/>
            <person name="Nixon K."/>
            <person name="Nusskern D.R."/>
            <person name="Pacleb J.M."/>
            <person name="Palazzolo M."/>
            <person name="Pittman G.S."/>
            <person name="Pan S."/>
            <person name="Pollard J."/>
            <person name="Puri V."/>
            <person name="Reese M.G."/>
            <person name="Reinert K."/>
            <person name="Remington K."/>
            <person name="Saunders R.D.C."/>
            <person name="Scheeler F."/>
            <person name="Shen H."/>
            <person name="Shue B.C."/>
            <person name="Siden-Kiamos I."/>
            <person name="Simpson M."/>
            <person name="Skupski M.P."/>
            <person name="Smith T.J."/>
            <person name="Spier E."/>
            <person name="Spradling A.C."/>
            <person name="Stapleton M."/>
            <person name="Strong R."/>
            <person name="Sun E."/>
            <person name="Svirskas R."/>
            <person name="Tector C."/>
            <person name="Turner R."/>
            <person name="Venter E."/>
            <person name="Wang A.H."/>
            <person name="Wang X."/>
            <person name="Wang Z.-Y."/>
            <person name="Wassarman D.A."/>
            <person name="Weinstock G.M."/>
            <person name="Weissenbach J."/>
            <person name="Williams S.M."/>
            <person name="Woodage T."/>
            <person name="Worley K.C."/>
            <person name="Wu D."/>
            <person name="Yang S."/>
            <person name="Yao Q.A."/>
            <person name="Ye J."/>
            <person name="Yeh R.-F."/>
            <person name="Zaveri J.S."/>
            <person name="Zhan M."/>
            <person name="Zhang G."/>
            <person name="Zhao Q."/>
            <person name="Zheng L."/>
            <person name="Zheng X.H."/>
            <person name="Zhong F.N."/>
            <person name="Zhong W."/>
            <person name="Zhou X."/>
            <person name="Zhu S.C."/>
            <person name="Zhu X."/>
            <person name="Smith H.O."/>
            <person name="Gibbs R.A."/>
            <person name="Myers E.W."/>
            <person name="Rubin G.M."/>
            <person name="Venter J.C."/>
        </authorList>
    </citation>
    <scope>NUCLEOTIDE SEQUENCE [LARGE SCALE GENOMIC DNA]</scope>
    <source>
        <strain>Berkeley</strain>
    </source>
</reference>
<reference key="3">
    <citation type="journal article" date="2002" name="Genome Biol.">
        <title>Annotation of the Drosophila melanogaster euchromatic genome: a systematic review.</title>
        <authorList>
            <person name="Misra S."/>
            <person name="Crosby M.A."/>
            <person name="Mungall C.J."/>
            <person name="Matthews B.B."/>
            <person name="Campbell K.S."/>
            <person name="Hradecky P."/>
            <person name="Huang Y."/>
            <person name="Kaminker J.S."/>
            <person name="Millburn G.H."/>
            <person name="Prochnik S.E."/>
            <person name="Smith C.D."/>
            <person name="Tupy J.L."/>
            <person name="Whitfield E.J."/>
            <person name="Bayraktaroglu L."/>
            <person name="Berman B.P."/>
            <person name="Bettencourt B.R."/>
            <person name="Celniker S.E."/>
            <person name="de Grey A.D.N.J."/>
            <person name="Drysdale R.A."/>
            <person name="Harris N.L."/>
            <person name="Richter J."/>
            <person name="Russo S."/>
            <person name="Schroeder A.J."/>
            <person name="Shu S.Q."/>
            <person name="Stapleton M."/>
            <person name="Yamada C."/>
            <person name="Ashburner M."/>
            <person name="Gelbart W.M."/>
            <person name="Rubin G.M."/>
            <person name="Lewis S.E."/>
        </authorList>
    </citation>
    <scope>GENOME REANNOTATION</scope>
    <source>
        <strain>Berkeley</strain>
    </source>
</reference>
<reference key="4">
    <citation type="journal article" date="2002" name="J. Biol. Chem.">
        <title>Functional conservation of subfamilies of putative UDP-N-acetylgalactosamine:polypeptide N-acetylgalactosaminyltransferases in Drosophila, Caenorhabditis elegans, and mammals. One subfamily composed of l(2)35Aa is essential in Drosophila.</title>
        <authorList>
            <person name="Schwientek T."/>
            <person name="Bennett E.P."/>
            <person name="Flores C."/>
            <person name="Thacker J."/>
            <person name="Hollmann M."/>
            <person name="Reis C.A."/>
            <person name="Behrens J."/>
            <person name="Mandel U."/>
            <person name="Keck B."/>
            <person name="Schaefer M.A."/>
            <person name="Haselmann K."/>
            <person name="Zubarev R."/>
            <person name="Roepstorff P."/>
            <person name="Burchell J.M."/>
            <person name="Taylor-Papadimitriou J."/>
            <person name="Hollingsworth M.A."/>
            <person name="Clausen H."/>
        </authorList>
    </citation>
    <scope>NUCLEOTIDE SEQUENCE [MRNA]</scope>
</reference>
<reference key="5">
    <citation type="journal article" date="2006" name="Glycobiology">
        <title>Expression of the UDP-GalNAc: polypeptide N-acetylgalactosaminyltransferase family is spatially and temporally regulated during Drosophila development.</title>
        <authorList>
            <person name="Tian E."/>
            <person name="Ten Hagen K.G."/>
        </authorList>
    </citation>
    <scope>TISSUE SPECIFICITY</scope>
    <scope>DEVELOPMENTAL STAGE</scope>
</reference>
<reference key="6">
    <citation type="journal article" date="2012" name="J. Biol. Chem.">
        <title>Multiple members of the UDP-GalNAc: polypeptide N-acetylgalactosaminyltransferase family are essential for viability in Drosophila.</title>
        <authorList>
            <person name="Tran D.T."/>
            <person name="Zhang L."/>
            <person name="Zhang Y."/>
            <person name="Tian E."/>
            <person name="Earl L.A."/>
            <person name="Ten Hagen K.G."/>
        </authorList>
    </citation>
    <scope>DISRUPTION PHENOTYPE</scope>
</reference>
<dbReference type="EC" id="2.4.1.41" evidence="6"/>
<dbReference type="EMBL" id="AY268065">
    <property type="protein sequence ID" value="AAQ56701.1"/>
    <property type="status" value="ALT_INIT"/>
    <property type="molecule type" value="mRNA"/>
</dbReference>
<dbReference type="EMBL" id="AE014134">
    <property type="protein sequence ID" value="AAN10370.2"/>
    <property type="molecule type" value="Genomic_DNA"/>
</dbReference>
<dbReference type="EMBL" id="AF324752">
    <property type="protein sequence ID" value="AAN75751.1"/>
    <property type="molecule type" value="mRNA"/>
</dbReference>
<dbReference type="RefSeq" id="NP_001137779.1">
    <property type="nucleotide sequence ID" value="NM_001144307.2"/>
</dbReference>
<dbReference type="RefSeq" id="NP_722910.2">
    <property type="nucleotide sequence ID" value="NM_164539.2"/>
</dbReference>
<dbReference type="SMR" id="Q8IA42"/>
<dbReference type="BioGRID" id="76436">
    <property type="interactions" value="2"/>
</dbReference>
<dbReference type="FunCoup" id="Q8IA42">
    <property type="interactions" value="270"/>
</dbReference>
<dbReference type="IntAct" id="Q8IA42">
    <property type="interactions" value="1"/>
</dbReference>
<dbReference type="STRING" id="7227.FBpp0305447"/>
<dbReference type="CAZy" id="CBM13">
    <property type="family name" value="Carbohydrate-Binding Module Family 13"/>
</dbReference>
<dbReference type="CAZy" id="GT27">
    <property type="family name" value="Glycosyltransferase Family 27"/>
</dbReference>
<dbReference type="GlyCosmos" id="Q8IA42">
    <property type="glycosylation" value="5 sites, No reported glycans"/>
</dbReference>
<dbReference type="GlyGen" id="Q8IA42">
    <property type="glycosylation" value="5 sites"/>
</dbReference>
<dbReference type="PaxDb" id="7227-FBpp0305447"/>
<dbReference type="DNASU" id="261610"/>
<dbReference type="EnsemblMetazoa" id="FBtr0114524">
    <property type="protein sequence ID" value="FBpp0113016"/>
    <property type="gene ID" value="FBgn0051956"/>
</dbReference>
<dbReference type="EnsemblMetazoa" id="FBtr0333248">
    <property type="protein sequence ID" value="FBpp0305447"/>
    <property type="gene ID" value="FBgn0051956"/>
</dbReference>
<dbReference type="GeneID" id="261610"/>
<dbReference type="KEGG" id="dme:Dmel_CG31956"/>
<dbReference type="AGR" id="FB:FBgn0051956"/>
<dbReference type="CTD" id="261610"/>
<dbReference type="FlyBase" id="FBgn0051956">
    <property type="gene designation" value="Pgant4"/>
</dbReference>
<dbReference type="VEuPathDB" id="VectorBase:FBgn0051956"/>
<dbReference type="eggNOG" id="KOG3736">
    <property type="taxonomic scope" value="Eukaryota"/>
</dbReference>
<dbReference type="GeneTree" id="ENSGT00940000166027"/>
<dbReference type="HOGENOM" id="CLU_013477_0_1_1"/>
<dbReference type="InParanoid" id="Q8IA42"/>
<dbReference type="OMA" id="DVHMAMK"/>
<dbReference type="OrthoDB" id="6159198at2759"/>
<dbReference type="BRENDA" id="2.4.1.41">
    <property type="organism ID" value="1994"/>
</dbReference>
<dbReference type="Reactome" id="R-DME-913709">
    <property type="pathway name" value="O-linked glycosylation of mucins"/>
</dbReference>
<dbReference type="UniPathway" id="UPA00378"/>
<dbReference type="BioGRID-ORCS" id="261610">
    <property type="hits" value="0 hits in 3 CRISPR screens"/>
</dbReference>
<dbReference type="GenomeRNAi" id="261610"/>
<dbReference type="PRO" id="PR:Q8IA42"/>
<dbReference type="Proteomes" id="UP000000803">
    <property type="component" value="Chromosome 2L"/>
</dbReference>
<dbReference type="Bgee" id="FBgn0051956">
    <property type="expression patterns" value="Expressed in thoracico-abdominal ganglion (Drosophila) and 20 other cell types or tissues"/>
</dbReference>
<dbReference type="ExpressionAtlas" id="Q8IA42">
    <property type="expression patterns" value="baseline and differential"/>
</dbReference>
<dbReference type="GO" id="GO:0005794">
    <property type="term" value="C:Golgi apparatus"/>
    <property type="evidence" value="ECO:0000318"/>
    <property type="project" value="GO_Central"/>
</dbReference>
<dbReference type="GO" id="GO:0000139">
    <property type="term" value="C:Golgi membrane"/>
    <property type="evidence" value="ECO:0000304"/>
    <property type="project" value="FlyBase"/>
</dbReference>
<dbReference type="GO" id="GO:0005795">
    <property type="term" value="C:Golgi stack"/>
    <property type="evidence" value="ECO:0000303"/>
    <property type="project" value="UniProtKB"/>
</dbReference>
<dbReference type="GO" id="GO:0030246">
    <property type="term" value="F:carbohydrate binding"/>
    <property type="evidence" value="ECO:0007669"/>
    <property type="project" value="UniProtKB-KW"/>
</dbReference>
<dbReference type="GO" id="GO:0046872">
    <property type="term" value="F:metal ion binding"/>
    <property type="evidence" value="ECO:0007669"/>
    <property type="project" value="UniProtKB-KW"/>
</dbReference>
<dbReference type="GO" id="GO:0004653">
    <property type="term" value="F:polypeptide N-acetylgalactosaminyltransferase activity"/>
    <property type="evidence" value="ECO:0000314"/>
    <property type="project" value="UniProtKB"/>
</dbReference>
<dbReference type="GO" id="GO:0051047">
    <property type="term" value="P:positive regulation of secretion"/>
    <property type="evidence" value="ECO:0000315"/>
    <property type="project" value="FlyBase"/>
</dbReference>
<dbReference type="GO" id="GO:0006493">
    <property type="term" value="P:protein O-linked glycosylation"/>
    <property type="evidence" value="ECO:0000314"/>
    <property type="project" value="UniProtKB"/>
</dbReference>
<dbReference type="GO" id="GO:0033363">
    <property type="term" value="P:secretory granule organization"/>
    <property type="evidence" value="ECO:0000315"/>
    <property type="project" value="FlyBase"/>
</dbReference>
<dbReference type="CDD" id="cd23462">
    <property type="entry name" value="beta-trefoil_Ricin_Pgant9-like"/>
    <property type="match status" value="1"/>
</dbReference>
<dbReference type="CDD" id="cd02510">
    <property type="entry name" value="pp-GalNAc-T"/>
    <property type="match status" value="1"/>
</dbReference>
<dbReference type="FunFam" id="3.90.550.10:FF:000296">
    <property type="entry name" value="Polypeptide N-acetylgalactosaminyltransferase"/>
    <property type="match status" value="1"/>
</dbReference>
<dbReference type="Gene3D" id="2.80.10.50">
    <property type="match status" value="1"/>
</dbReference>
<dbReference type="Gene3D" id="3.90.550.10">
    <property type="entry name" value="Spore Coat Polysaccharide Biosynthesis Protein SpsA, Chain A"/>
    <property type="match status" value="1"/>
</dbReference>
<dbReference type="InterPro" id="IPR045885">
    <property type="entry name" value="GalNAc-T"/>
</dbReference>
<dbReference type="InterPro" id="IPR001173">
    <property type="entry name" value="Glyco_trans_2-like"/>
</dbReference>
<dbReference type="InterPro" id="IPR029044">
    <property type="entry name" value="Nucleotide-diphossugar_trans"/>
</dbReference>
<dbReference type="InterPro" id="IPR035992">
    <property type="entry name" value="Ricin_B-like_lectins"/>
</dbReference>
<dbReference type="InterPro" id="IPR000772">
    <property type="entry name" value="Ricin_B_lectin"/>
</dbReference>
<dbReference type="PANTHER" id="PTHR11675">
    <property type="entry name" value="N-ACETYLGALACTOSAMINYLTRANSFERASE"/>
    <property type="match status" value="1"/>
</dbReference>
<dbReference type="PANTHER" id="PTHR11675:SF134">
    <property type="entry name" value="N-ACETYLGALACTOSAMINYLTRANSFERASE 4-RELATED"/>
    <property type="match status" value="1"/>
</dbReference>
<dbReference type="Pfam" id="PF00535">
    <property type="entry name" value="Glycos_transf_2"/>
    <property type="match status" value="1"/>
</dbReference>
<dbReference type="Pfam" id="PF00652">
    <property type="entry name" value="Ricin_B_lectin"/>
    <property type="match status" value="1"/>
</dbReference>
<dbReference type="SMART" id="SM00458">
    <property type="entry name" value="RICIN"/>
    <property type="match status" value="1"/>
</dbReference>
<dbReference type="SUPFAM" id="SSF53448">
    <property type="entry name" value="Nucleotide-diphospho-sugar transferases"/>
    <property type="match status" value="1"/>
</dbReference>
<dbReference type="SUPFAM" id="SSF50370">
    <property type="entry name" value="Ricin B-like lectins"/>
    <property type="match status" value="1"/>
</dbReference>
<dbReference type="PROSITE" id="PS50231">
    <property type="entry name" value="RICIN_B_LECTIN"/>
    <property type="match status" value="1"/>
</dbReference>
<protein>
    <recommendedName>
        <fullName>N-acetylgalactosaminyltransferase 4</fullName>
        <ecNumber evidence="6">2.4.1.41</ecNumber>
    </recommendedName>
    <alternativeName>
        <fullName>Protein-UDP acetylgalactosaminyltransferase 4</fullName>
    </alternativeName>
    <alternativeName>
        <fullName>UDP-GalNAc:polypeptide N-acetylgalactosaminyltransferase 4</fullName>
        <shortName>pp-GaNTase 4</shortName>
    </alternativeName>
</protein>
<evidence type="ECO:0000250" key="1"/>
<evidence type="ECO:0000250" key="2">
    <source>
        <dbReference type="UniProtKB" id="O08912"/>
    </source>
</evidence>
<evidence type="ECO:0000250" key="3">
    <source>
        <dbReference type="UniProtKB" id="Q10471"/>
    </source>
</evidence>
<evidence type="ECO:0000255" key="4"/>
<evidence type="ECO:0000255" key="5">
    <source>
        <dbReference type="PROSITE-ProRule" id="PRU00174"/>
    </source>
</evidence>
<evidence type="ECO:0000269" key="6">
    <source>
    </source>
</evidence>
<evidence type="ECO:0000269" key="7">
    <source>
    </source>
</evidence>
<evidence type="ECO:0000269" key="8">
    <source>
    </source>
</evidence>
<evidence type="ECO:0000305" key="9"/>
<evidence type="ECO:0000305" key="10">
    <source>
    </source>
</evidence>
<evidence type="ECO:0000312" key="11">
    <source>
        <dbReference type="FlyBase" id="FBgn0051956"/>
    </source>
</evidence>
<proteinExistence type="evidence at protein level"/>
<name>GALT4_DROME</name>
<keyword id="KW-1015">Disulfide bond</keyword>
<keyword id="KW-0325">Glycoprotein</keyword>
<keyword id="KW-0328">Glycosyltransferase</keyword>
<keyword id="KW-0333">Golgi apparatus</keyword>
<keyword id="KW-0430">Lectin</keyword>
<keyword id="KW-0464">Manganese</keyword>
<keyword id="KW-0472">Membrane</keyword>
<keyword id="KW-0479">Metal-binding</keyword>
<keyword id="KW-1185">Reference proteome</keyword>
<keyword id="KW-0735">Signal-anchor</keyword>
<keyword id="KW-0808">Transferase</keyword>
<keyword id="KW-0812">Transmembrane</keyword>
<keyword id="KW-1133">Transmembrane helix</keyword>
<feature type="chain" id="PRO_0000059158" description="N-acetylgalactosaminyltransferase 4">
    <location>
        <begin position="1"/>
        <end position="644"/>
    </location>
</feature>
<feature type="topological domain" description="Cytoplasmic" evidence="4">
    <location>
        <begin position="1"/>
        <end position="13"/>
    </location>
</feature>
<feature type="transmembrane region" description="Helical; Signal-anchor for type II membrane protein" evidence="4">
    <location>
        <begin position="14"/>
        <end position="34"/>
    </location>
</feature>
<feature type="topological domain" description="Lumenal" evidence="4">
    <location>
        <begin position="35"/>
        <end position="644"/>
    </location>
</feature>
<feature type="domain" description="Ricin B-type lectin" evidence="5">
    <location>
        <begin position="496"/>
        <end position="629"/>
    </location>
</feature>
<feature type="region of interest" description="Catalytic subdomain A" evidence="2">
    <location>
        <begin position="177"/>
        <end position="288"/>
    </location>
</feature>
<feature type="region of interest" description="Catalytic subdomain B" evidence="2">
    <location>
        <begin position="345"/>
        <end position="407"/>
    </location>
</feature>
<feature type="binding site" evidence="3">
    <location>
        <position position="218"/>
    </location>
    <ligand>
        <name>substrate</name>
    </ligand>
</feature>
<feature type="binding site" evidence="3">
    <location>
        <position position="249"/>
    </location>
    <ligand>
        <name>substrate</name>
    </ligand>
</feature>
<feature type="binding site" evidence="3">
    <location>
        <position position="272"/>
    </location>
    <ligand>
        <name>Mn(2+)</name>
        <dbReference type="ChEBI" id="CHEBI:29035"/>
    </ligand>
</feature>
<feature type="binding site" evidence="3">
    <location>
        <position position="273"/>
    </location>
    <ligand>
        <name>substrate</name>
    </ligand>
</feature>
<feature type="binding site" evidence="3">
    <location>
        <position position="274"/>
    </location>
    <ligand>
        <name>Mn(2+)</name>
        <dbReference type="ChEBI" id="CHEBI:29035"/>
    </ligand>
</feature>
<feature type="binding site" evidence="3">
    <location>
        <position position="376"/>
    </location>
    <ligand>
        <name>substrate</name>
    </ligand>
</feature>
<feature type="binding site" evidence="3">
    <location>
        <position position="404"/>
    </location>
    <ligand>
        <name>Mn(2+)</name>
        <dbReference type="ChEBI" id="CHEBI:29035"/>
    </ligand>
</feature>
<feature type="binding site" evidence="3">
    <location>
        <position position="407"/>
    </location>
    <ligand>
        <name>substrate</name>
    </ligand>
</feature>
<feature type="glycosylation site" description="N-linked (GlcNAc...) asparagine" evidence="4">
    <location>
        <position position="157"/>
    </location>
</feature>
<feature type="glycosylation site" description="N-linked (GlcNAc...) asparagine" evidence="4">
    <location>
        <position position="179"/>
    </location>
</feature>
<feature type="glycosylation site" description="N-linked (GlcNAc...) asparagine" evidence="4">
    <location>
        <position position="529"/>
    </location>
</feature>
<feature type="glycosylation site" description="N-linked (GlcNAc...) asparagine" evidence="4">
    <location>
        <position position="565"/>
    </location>
</feature>
<feature type="glycosylation site" description="N-linked (GlcNAc...) asparagine" evidence="4">
    <location>
        <position position="632"/>
    </location>
</feature>
<feature type="disulfide bond" evidence="5">
    <location>
        <begin position="509"/>
        <end position="526"/>
    </location>
</feature>
<feature type="disulfide bond" evidence="5">
    <location>
        <begin position="556"/>
        <end position="573"/>
    </location>
</feature>
<feature type="disulfide bond" evidence="5">
    <location>
        <begin position="600"/>
        <end position="617"/>
    </location>
</feature>
<sequence length="644" mass="74040">MAIKKRYVKRLLRKVVLLLVVIVTVSLVTTLVVERRMKNAAELTEQLDPNGDPITPVFRAANIHPTRKAPRPPFQDRNSVVDIPRSDKLQGFRLPEPKGERKDWHDYAAMEADRKRSGFGEHGVAVKIENPDEKQLEKEHYEMNGFNGLISDRISVNRSVPDLRLEACKTRKYLAKLPNISVIFIFFNEHFNTLLRSIYSVINRTPPELLKQIVLVDDGSEWDVLKQPLDDYVQQHFPHLVTIVRNPERQGLIGARIAGAKVAVGQVMVFFDSHIEVNYNWLPPLIEPIAINPKISTCPMVDTISHEDFSYFSGNKDGARGGFDWKMLYKQLPVLPEDALDKSMPYRSPVMMGGLFAINTDFFWDLGGYDDQLDIWGGEQYELSFKIWMCGGMLLDVPCSRVAHIFRGPMKPRGNPRGHNFVAKNHKRVAEVWMDEYKQYVYKRDPKTYDNLDAGDLTRQRGVRERLKCKSFHWFMTEVAPDFLVKFPPVEPPSYAAGIIQNVANPVYCLDNMGKSTEEAVGMFSCADNRTHPQPNQFWELSIFRDLRMKGFDSVCLDVHEGPPNATVWMWSCHSQGGNQFWYYDRQTQRLVHGENNKRCLEGFVENGIAKVVANSCENGNDRQRWEFGFVNHTMLDTFYDGLK</sequence>